<evidence type="ECO:0000269" key="1">
    <source>
    </source>
</evidence>
<evidence type="ECO:0000269" key="2">
    <source>
    </source>
</evidence>
<evidence type="ECO:0000269" key="3">
    <source>
    </source>
</evidence>
<evidence type="ECO:0000269" key="4">
    <source>
    </source>
</evidence>
<evidence type="ECO:0000269" key="5">
    <source ref="8"/>
</evidence>
<evidence type="ECO:0000303" key="6">
    <source>
    </source>
</evidence>
<evidence type="ECO:0000305" key="7"/>
<evidence type="ECO:0007744" key="8">
    <source>
    </source>
</evidence>
<evidence type="ECO:0007744" key="9">
    <source>
    </source>
</evidence>
<dbReference type="EMBL" id="S79862">
    <property type="protein sequence ID" value="AAB35397.1"/>
    <property type="molecule type" value="mRNA"/>
</dbReference>
<dbReference type="EMBL" id="D31889">
    <property type="protein sequence ID" value="BAA06687.1"/>
    <property type="molecule type" value="mRNA"/>
</dbReference>
<dbReference type="EMBL" id="AK303007">
    <property type="protein sequence ID" value="BAG64140.1"/>
    <property type="molecule type" value="mRNA"/>
</dbReference>
<dbReference type="EMBL" id="AL161911">
    <property type="status" value="NOT_ANNOTATED_CDS"/>
    <property type="molecule type" value="Genomic_DNA"/>
</dbReference>
<dbReference type="EMBL" id="CH471090">
    <property type="protein sequence ID" value="EAW87471.1"/>
    <property type="molecule type" value="Genomic_DNA"/>
</dbReference>
<dbReference type="EMBL" id="BC014478">
    <property type="protein sequence ID" value="AAH14478.1"/>
    <property type="molecule type" value="mRNA"/>
</dbReference>
<dbReference type="CCDS" id="CCDS59143.1">
    <molecule id="Q16401-2"/>
</dbReference>
<dbReference type="CCDS" id="CCDS6824.1">
    <molecule id="Q16401-1"/>
</dbReference>
<dbReference type="RefSeq" id="NP_001257356.1">
    <molecule id="Q16401-2"/>
    <property type="nucleotide sequence ID" value="NM_001270427.2"/>
</dbReference>
<dbReference type="RefSeq" id="NP_005038.1">
    <molecule id="Q16401-1"/>
    <property type="nucleotide sequence ID" value="NM_005047.4"/>
</dbReference>
<dbReference type="SMR" id="Q16401"/>
<dbReference type="BioGRID" id="111684">
    <property type="interactions" value="138"/>
</dbReference>
<dbReference type="CORUM" id="Q16401"/>
<dbReference type="FunCoup" id="Q16401">
    <property type="interactions" value="2922"/>
</dbReference>
<dbReference type="IntAct" id="Q16401">
    <property type="interactions" value="61"/>
</dbReference>
<dbReference type="MINT" id="Q16401"/>
<dbReference type="STRING" id="9606.ENSP00000210313"/>
<dbReference type="GlyGen" id="Q16401">
    <property type="glycosylation" value="2 sites, 1 O-linked glycan (1 site)"/>
</dbReference>
<dbReference type="iPTMnet" id="Q16401"/>
<dbReference type="MetOSite" id="Q16401"/>
<dbReference type="PhosphoSitePlus" id="Q16401"/>
<dbReference type="SwissPalm" id="Q16401"/>
<dbReference type="BioMuta" id="PSMD5"/>
<dbReference type="DMDM" id="3122657"/>
<dbReference type="CPTAC" id="CPTAC-428"/>
<dbReference type="CPTAC" id="CPTAC-429"/>
<dbReference type="jPOST" id="Q16401"/>
<dbReference type="MassIVE" id="Q16401"/>
<dbReference type="PaxDb" id="9606-ENSP00000210313"/>
<dbReference type="PeptideAtlas" id="Q16401"/>
<dbReference type="ProteomicsDB" id="5609"/>
<dbReference type="ProteomicsDB" id="60870">
    <molecule id="Q16401-1"/>
</dbReference>
<dbReference type="Pumba" id="Q16401"/>
<dbReference type="TopDownProteomics" id="Q16401-1">
    <molecule id="Q16401-1"/>
</dbReference>
<dbReference type="Antibodypedia" id="757">
    <property type="antibodies" value="230 antibodies from 28 providers"/>
</dbReference>
<dbReference type="DNASU" id="5711"/>
<dbReference type="Ensembl" id="ENST00000210313.8">
    <molecule id="Q16401-1"/>
    <property type="protein sequence ID" value="ENSP00000210313.2"/>
    <property type="gene ID" value="ENSG00000095261.14"/>
</dbReference>
<dbReference type="Ensembl" id="ENST00000373904.5">
    <molecule id="Q16401-2"/>
    <property type="protein sequence ID" value="ENSP00000363011.5"/>
    <property type="gene ID" value="ENSG00000095261.14"/>
</dbReference>
<dbReference type="GeneID" id="5711"/>
<dbReference type="KEGG" id="hsa:5711"/>
<dbReference type="MANE-Select" id="ENST00000210313.8">
    <property type="protein sequence ID" value="ENSP00000210313.2"/>
    <property type="RefSeq nucleotide sequence ID" value="NM_005047.4"/>
    <property type="RefSeq protein sequence ID" value="NP_005038.1"/>
</dbReference>
<dbReference type="UCSC" id="uc004bko.5">
    <molecule id="Q16401-1"/>
    <property type="organism name" value="human"/>
</dbReference>
<dbReference type="AGR" id="HGNC:9563"/>
<dbReference type="CTD" id="5711"/>
<dbReference type="DisGeNET" id="5711"/>
<dbReference type="GeneCards" id="PSMD5"/>
<dbReference type="HGNC" id="HGNC:9563">
    <property type="gene designation" value="PSMD5"/>
</dbReference>
<dbReference type="HPA" id="ENSG00000095261">
    <property type="expression patterns" value="Low tissue specificity"/>
</dbReference>
<dbReference type="MIM" id="604452">
    <property type="type" value="gene"/>
</dbReference>
<dbReference type="neXtProt" id="NX_Q16401"/>
<dbReference type="OpenTargets" id="ENSG00000095261"/>
<dbReference type="PharmGKB" id="PA33909"/>
<dbReference type="VEuPathDB" id="HostDB:ENSG00000095261"/>
<dbReference type="eggNOG" id="KOG4413">
    <property type="taxonomic scope" value="Eukaryota"/>
</dbReference>
<dbReference type="GeneTree" id="ENSGT00390000013040"/>
<dbReference type="HOGENOM" id="CLU_043710_0_0_1"/>
<dbReference type="InParanoid" id="Q16401"/>
<dbReference type="OMA" id="WGQEYIS"/>
<dbReference type="OrthoDB" id="10250600at2759"/>
<dbReference type="PAN-GO" id="Q16401">
    <property type="GO annotations" value="0 GO annotations based on evolutionary models"/>
</dbReference>
<dbReference type="PhylomeDB" id="Q16401"/>
<dbReference type="TreeFam" id="TF106231"/>
<dbReference type="PathwayCommons" id="Q16401"/>
<dbReference type="Reactome" id="R-HSA-9907900">
    <property type="pathway name" value="Proteasome assembly"/>
</dbReference>
<dbReference type="SignaLink" id="Q16401"/>
<dbReference type="BioGRID-ORCS" id="5711">
    <property type="hits" value="11 hits in 1165 CRISPR screens"/>
</dbReference>
<dbReference type="ChiTaRS" id="PSMD5">
    <property type="organism name" value="human"/>
</dbReference>
<dbReference type="GeneWiki" id="PSMD5"/>
<dbReference type="GenomeRNAi" id="5711"/>
<dbReference type="Pharos" id="Q16401">
    <property type="development level" value="Tbio"/>
</dbReference>
<dbReference type="PRO" id="PR:Q16401"/>
<dbReference type="Proteomes" id="UP000005640">
    <property type="component" value="Chromosome 9"/>
</dbReference>
<dbReference type="RNAct" id="Q16401">
    <property type="molecule type" value="protein"/>
</dbReference>
<dbReference type="Bgee" id="ENSG00000095261">
    <property type="expression patterns" value="Expressed in hair follicle and 211 other cell types or tissues"/>
</dbReference>
<dbReference type="ExpressionAtlas" id="Q16401">
    <property type="expression patterns" value="baseline and differential"/>
</dbReference>
<dbReference type="GO" id="GO:0005829">
    <property type="term" value="C:cytosol"/>
    <property type="evidence" value="ECO:0000304"/>
    <property type="project" value="Reactome"/>
</dbReference>
<dbReference type="GO" id="GO:0022624">
    <property type="term" value="C:proteasome accessory complex"/>
    <property type="evidence" value="ECO:0000250"/>
    <property type="project" value="UniProtKB"/>
</dbReference>
<dbReference type="GO" id="GO:0000502">
    <property type="term" value="C:proteasome complex"/>
    <property type="evidence" value="ECO:0000304"/>
    <property type="project" value="ProtInc"/>
</dbReference>
<dbReference type="GO" id="GO:0070682">
    <property type="term" value="P:proteasome regulatory particle assembly"/>
    <property type="evidence" value="ECO:0000314"/>
    <property type="project" value="UniProtKB"/>
</dbReference>
<dbReference type="FunFam" id="1.25.10.10:FF:000208">
    <property type="entry name" value="26S proteasome non-ATPase regulatory subunit 5"/>
    <property type="match status" value="1"/>
</dbReference>
<dbReference type="FunFam" id="1.25.10.10:FF:000261">
    <property type="entry name" value="26S proteasome non-ATPase regulatory subunit 5"/>
    <property type="match status" value="1"/>
</dbReference>
<dbReference type="Gene3D" id="1.25.10.10">
    <property type="entry name" value="Leucine-rich Repeat Variant"/>
    <property type="match status" value="2"/>
</dbReference>
<dbReference type="InterPro" id="IPR011989">
    <property type="entry name" value="ARM-like"/>
</dbReference>
<dbReference type="InterPro" id="IPR016024">
    <property type="entry name" value="ARM-type_fold"/>
</dbReference>
<dbReference type="InterPro" id="IPR019538">
    <property type="entry name" value="PSMD5"/>
</dbReference>
<dbReference type="PANTHER" id="PTHR13554:SF10">
    <property type="entry name" value="26S PROTEASOME NON-ATPASE REGULATORY SUBUNIT 5"/>
    <property type="match status" value="1"/>
</dbReference>
<dbReference type="PANTHER" id="PTHR13554">
    <property type="entry name" value="26S PROTEASOME NON-ATPASE REGULATORY SUBUNIT 5-RELATED"/>
    <property type="match status" value="1"/>
</dbReference>
<dbReference type="Pfam" id="PF10508">
    <property type="entry name" value="Proteasom_PSMB"/>
    <property type="match status" value="1"/>
</dbReference>
<dbReference type="SUPFAM" id="SSF48371">
    <property type="entry name" value="ARM repeat"/>
    <property type="match status" value="1"/>
</dbReference>
<sequence>MAAQALALLREVARLEAPLEELRALHSVLQAVPLNELRQQAAELRLGPLFSLLNENHREKTTLCVSILERLLQAMEPVHVARNLRVDLQRGLIHPDDSVKILTLSQIGRIVENSDAVTEILNNAELLKQIVYCIGGENLSVAKAAIKSLSRISLTQAGLEALFESNLLDDLKSVMKTNDIVRYRVYELIIEISSVSPESLNYCTTSGLVTQLLRELTGEDVLVRATCIEMVTSLAYTHHGRQYLAQEGVIDQISNIIVGADSDPFSSFYLPGFVKFFGNLAVMDSPQQICERYPIFVEKVFEMIESQDPTMIGVAVDTVGILGSNVEGKQVLQKTGTRFERLLMRIGHQSKNAPVELKIRCLDAISSLLYLPPEQQTDDLLRMTESWFSSLSRDPLELFRGISSQPFPELHCAALKVFTAIANQPWAQKLMFNSPGFVEYVVDRSVEHDKASKDAKYELVKALANSKTIAEIFGNPNYLRLRTYLSEGPYYVKPVSTTAVEGAE</sequence>
<gene>
    <name type="primary">PSMD5</name>
    <name type="synonym">KIAA0072</name>
</gene>
<comment type="function">
    <text evidence="3 4">Acts as a chaperone during the assembly of the 26S proteasome, specifically of the base subcomplex of the PA700/19S regulatory complex (RC). In the initial step of the base subcomplex assembly is part of an intermediate PSMD5:PSMC2:PSMC1:PSMD2 module which probably assembles with a PSMD10:PSMC4:PSMC5:PAAF1 module followed by dissociation of PSMD5.</text>
</comment>
<comment type="subunit">
    <text evidence="2 3 4">Interacts with PSMC1, PSMC2, PSMD1 and PSMD6. Part of transient complex containing PSMD5, PSMC2, PSMC1 and PSMD2 formed during the assembly of the 26S proteasome.</text>
</comment>
<comment type="interaction">
    <interactant intactId="EBI-752143">
        <id>Q16401</id>
    </interactant>
    <interactant intactId="EBI-935503">
        <id>Q9H0C5</id>
        <label>BTBD1</label>
    </interactant>
    <organismsDiffer>false</organismsDiffer>
    <experiments>3</experiments>
</comment>
<comment type="interaction">
    <interactant intactId="EBI-752143">
        <id>Q16401</id>
    </interactant>
    <interactant intactId="EBI-710091">
        <id>Q9BX70</id>
        <label>BTBD2</label>
    </interactant>
    <organismsDiffer>false</organismsDiffer>
    <experiments>3</experiments>
</comment>
<comment type="interaction">
    <interactant intactId="EBI-752143">
        <id>Q16401</id>
    </interactant>
    <interactant intactId="EBI-10276168">
        <id>Q8WTX7</id>
        <label>CASTOR1</label>
    </interactant>
    <organismsDiffer>false</organismsDiffer>
    <experiments>3</experiments>
</comment>
<comment type="interaction">
    <interactant intactId="EBI-752143">
        <id>Q16401</id>
    </interactant>
    <interactant intactId="EBI-748312">
        <id>P49821</id>
        <label>NDUFV1</label>
    </interactant>
    <organismsDiffer>false</organismsDiffer>
    <experiments>3</experiments>
</comment>
<comment type="interaction">
    <interactant intactId="EBI-752143">
        <id>Q16401</id>
    </interactant>
    <interactant intactId="EBI-357598">
        <id>P62191</id>
        <label>PSMC1</label>
    </interactant>
    <organismsDiffer>false</organismsDiffer>
    <experiments>14</experiments>
</comment>
<comment type="interaction">
    <interactant intactId="EBI-752143">
        <id>Q16401</id>
    </interactant>
    <interactant intactId="EBI-359710">
        <id>P35998</id>
        <label>PSMC2</label>
    </interactant>
    <organismsDiffer>false</organismsDiffer>
    <experiments>25</experiments>
</comment>
<comment type="interaction">
    <interactant intactId="EBI-752143">
        <id>Q16401</id>
    </interactant>
    <interactant intactId="EBI-717422">
        <id>Q12800</id>
        <label>TFCP2</label>
    </interactant>
    <organismsDiffer>false</organismsDiffer>
    <experiments>3</experiments>
</comment>
<comment type="interaction">
    <interactant intactId="EBI-752143">
        <id>Q16401</id>
    </interactant>
    <interactant intactId="EBI-720609">
        <id>O76024</id>
        <label>WFS1</label>
    </interactant>
    <organismsDiffer>false</organismsDiffer>
    <experiments>3</experiments>
</comment>
<comment type="alternative products">
    <event type="alternative splicing"/>
    <isoform>
        <id>Q16401-1</id>
        <name>1</name>
        <sequence type="displayed"/>
    </isoform>
    <isoform>
        <id>Q16401-2</id>
        <name>2</name>
        <sequence type="described" ref="VSP_045176"/>
    </isoform>
</comment>
<comment type="domain">
    <text>Rich in dileucine repeats, which have been implicated in trafficking of a variety of transmembrane proteins.</text>
</comment>
<comment type="similarity">
    <text evidence="7">Belongs to the proteasome subunit S5B/HSM3 family.</text>
</comment>
<comment type="caution">
    <text evidence="7">Was initially identified as a genuine component of the 26S proteasome.</text>
</comment>
<organism>
    <name type="scientific">Homo sapiens</name>
    <name type="common">Human</name>
    <dbReference type="NCBI Taxonomy" id="9606"/>
    <lineage>
        <taxon>Eukaryota</taxon>
        <taxon>Metazoa</taxon>
        <taxon>Chordata</taxon>
        <taxon>Craniata</taxon>
        <taxon>Vertebrata</taxon>
        <taxon>Euteleostomi</taxon>
        <taxon>Mammalia</taxon>
        <taxon>Eutheria</taxon>
        <taxon>Euarchontoglires</taxon>
        <taxon>Primates</taxon>
        <taxon>Haplorrhini</taxon>
        <taxon>Catarrhini</taxon>
        <taxon>Hominidae</taxon>
        <taxon>Homo</taxon>
    </lineage>
</organism>
<name>PSMD5_HUMAN</name>
<proteinExistence type="evidence at protein level"/>
<reference key="1">
    <citation type="journal article" date="1995" name="J. Biol. Chem.">
        <title>Molecular cloning and expression of a 26 S protease subunit enriched in dileucine repeats.</title>
        <authorList>
            <person name="Deveraux Q."/>
            <person name="Jensen C."/>
            <person name="Rechsteiner M."/>
        </authorList>
    </citation>
    <scope>NUCLEOTIDE SEQUENCE [MRNA] (ISOFORM 1)</scope>
    <scope>PROTEIN SEQUENCE OF 75-96; 311-337 AND 431-449</scope>
    <source>
        <tissue>Mammary cancer</tissue>
    </source>
</reference>
<reference key="2">
    <citation type="journal article" date="1994" name="DNA Res.">
        <title>Prediction of the coding sequences of unidentified human genes. II. The coding sequences of 40 new genes (KIAA0041-KIAA0080) deduced by analysis of cDNA clones from human cell line KG-1.</title>
        <authorList>
            <person name="Nomura N."/>
            <person name="Nagase T."/>
            <person name="Miyajima N."/>
            <person name="Sazuka T."/>
            <person name="Tanaka A."/>
            <person name="Sato S."/>
            <person name="Seki N."/>
            <person name="Kawarabayasi Y."/>
            <person name="Ishikawa K."/>
            <person name="Tabata S."/>
        </authorList>
    </citation>
    <scope>NUCLEOTIDE SEQUENCE [LARGE SCALE MRNA] (ISOFORM 1)</scope>
    <source>
        <tissue>Bone marrow</tissue>
    </source>
</reference>
<reference key="3">
    <citation type="journal article" date="2004" name="Nat. Genet.">
        <title>Complete sequencing and characterization of 21,243 full-length human cDNAs.</title>
        <authorList>
            <person name="Ota T."/>
            <person name="Suzuki Y."/>
            <person name="Nishikawa T."/>
            <person name="Otsuki T."/>
            <person name="Sugiyama T."/>
            <person name="Irie R."/>
            <person name="Wakamatsu A."/>
            <person name="Hayashi K."/>
            <person name="Sato H."/>
            <person name="Nagai K."/>
            <person name="Kimura K."/>
            <person name="Makita H."/>
            <person name="Sekine M."/>
            <person name="Obayashi M."/>
            <person name="Nishi T."/>
            <person name="Shibahara T."/>
            <person name="Tanaka T."/>
            <person name="Ishii S."/>
            <person name="Yamamoto J."/>
            <person name="Saito K."/>
            <person name="Kawai Y."/>
            <person name="Isono Y."/>
            <person name="Nakamura Y."/>
            <person name="Nagahari K."/>
            <person name="Murakami K."/>
            <person name="Yasuda T."/>
            <person name="Iwayanagi T."/>
            <person name="Wagatsuma M."/>
            <person name="Shiratori A."/>
            <person name="Sudo H."/>
            <person name="Hosoiri T."/>
            <person name="Kaku Y."/>
            <person name="Kodaira H."/>
            <person name="Kondo H."/>
            <person name="Sugawara M."/>
            <person name="Takahashi M."/>
            <person name="Kanda K."/>
            <person name="Yokoi T."/>
            <person name="Furuya T."/>
            <person name="Kikkawa E."/>
            <person name="Omura Y."/>
            <person name="Abe K."/>
            <person name="Kamihara K."/>
            <person name="Katsuta N."/>
            <person name="Sato K."/>
            <person name="Tanikawa M."/>
            <person name="Yamazaki M."/>
            <person name="Ninomiya K."/>
            <person name="Ishibashi T."/>
            <person name="Yamashita H."/>
            <person name="Murakawa K."/>
            <person name="Fujimori K."/>
            <person name="Tanai H."/>
            <person name="Kimata M."/>
            <person name="Watanabe M."/>
            <person name="Hiraoka S."/>
            <person name="Chiba Y."/>
            <person name="Ishida S."/>
            <person name="Ono Y."/>
            <person name="Takiguchi S."/>
            <person name="Watanabe S."/>
            <person name="Yosida M."/>
            <person name="Hotuta T."/>
            <person name="Kusano J."/>
            <person name="Kanehori K."/>
            <person name="Takahashi-Fujii A."/>
            <person name="Hara H."/>
            <person name="Tanase T.-O."/>
            <person name="Nomura Y."/>
            <person name="Togiya S."/>
            <person name="Komai F."/>
            <person name="Hara R."/>
            <person name="Takeuchi K."/>
            <person name="Arita M."/>
            <person name="Imose N."/>
            <person name="Musashino K."/>
            <person name="Yuuki H."/>
            <person name="Oshima A."/>
            <person name="Sasaki N."/>
            <person name="Aotsuka S."/>
            <person name="Yoshikawa Y."/>
            <person name="Matsunawa H."/>
            <person name="Ichihara T."/>
            <person name="Shiohata N."/>
            <person name="Sano S."/>
            <person name="Moriya S."/>
            <person name="Momiyama H."/>
            <person name="Satoh N."/>
            <person name="Takami S."/>
            <person name="Terashima Y."/>
            <person name="Suzuki O."/>
            <person name="Nakagawa S."/>
            <person name="Senoh A."/>
            <person name="Mizoguchi H."/>
            <person name="Goto Y."/>
            <person name="Shimizu F."/>
            <person name="Wakebe H."/>
            <person name="Hishigaki H."/>
            <person name="Watanabe T."/>
            <person name="Sugiyama A."/>
            <person name="Takemoto M."/>
            <person name="Kawakami B."/>
            <person name="Yamazaki M."/>
            <person name="Watanabe K."/>
            <person name="Kumagai A."/>
            <person name="Itakura S."/>
            <person name="Fukuzumi Y."/>
            <person name="Fujimori Y."/>
            <person name="Komiyama M."/>
            <person name="Tashiro H."/>
            <person name="Tanigami A."/>
            <person name="Fujiwara T."/>
            <person name="Ono T."/>
            <person name="Yamada K."/>
            <person name="Fujii Y."/>
            <person name="Ozaki K."/>
            <person name="Hirao M."/>
            <person name="Ohmori Y."/>
            <person name="Kawabata A."/>
            <person name="Hikiji T."/>
            <person name="Kobatake N."/>
            <person name="Inagaki H."/>
            <person name="Ikema Y."/>
            <person name="Okamoto S."/>
            <person name="Okitani R."/>
            <person name="Kawakami T."/>
            <person name="Noguchi S."/>
            <person name="Itoh T."/>
            <person name="Shigeta K."/>
            <person name="Senba T."/>
            <person name="Matsumura K."/>
            <person name="Nakajima Y."/>
            <person name="Mizuno T."/>
            <person name="Morinaga M."/>
            <person name="Sasaki M."/>
            <person name="Togashi T."/>
            <person name="Oyama M."/>
            <person name="Hata H."/>
            <person name="Watanabe M."/>
            <person name="Komatsu T."/>
            <person name="Mizushima-Sugano J."/>
            <person name="Satoh T."/>
            <person name="Shirai Y."/>
            <person name="Takahashi Y."/>
            <person name="Nakagawa K."/>
            <person name="Okumura K."/>
            <person name="Nagase T."/>
            <person name="Nomura N."/>
            <person name="Kikuchi H."/>
            <person name="Masuho Y."/>
            <person name="Yamashita R."/>
            <person name="Nakai K."/>
            <person name="Yada T."/>
            <person name="Nakamura Y."/>
            <person name="Ohara O."/>
            <person name="Isogai T."/>
            <person name="Sugano S."/>
        </authorList>
    </citation>
    <scope>NUCLEOTIDE SEQUENCE [LARGE SCALE MRNA] (ISOFORM 2)</scope>
    <source>
        <tissue>Testis</tissue>
    </source>
</reference>
<reference key="4">
    <citation type="journal article" date="2004" name="Nature">
        <title>DNA sequence and analysis of human chromosome 9.</title>
        <authorList>
            <person name="Humphray S.J."/>
            <person name="Oliver K."/>
            <person name="Hunt A.R."/>
            <person name="Plumb R.W."/>
            <person name="Loveland J.E."/>
            <person name="Howe K.L."/>
            <person name="Andrews T.D."/>
            <person name="Searle S."/>
            <person name="Hunt S.E."/>
            <person name="Scott C.E."/>
            <person name="Jones M.C."/>
            <person name="Ainscough R."/>
            <person name="Almeida J.P."/>
            <person name="Ambrose K.D."/>
            <person name="Ashwell R.I.S."/>
            <person name="Babbage A.K."/>
            <person name="Babbage S."/>
            <person name="Bagguley C.L."/>
            <person name="Bailey J."/>
            <person name="Banerjee R."/>
            <person name="Barker D.J."/>
            <person name="Barlow K.F."/>
            <person name="Bates K."/>
            <person name="Beasley H."/>
            <person name="Beasley O."/>
            <person name="Bird C.P."/>
            <person name="Bray-Allen S."/>
            <person name="Brown A.J."/>
            <person name="Brown J.Y."/>
            <person name="Burford D."/>
            <person name="Burrill W."/>
            <person name="Burton J."/>
            <person name="Carder C."/>
            <person name="Carter N.P."/>
            <person name="Chapman J.C."/>
            <person name="Chen Y."/>
            <person name="Clarke G."/>
            <person name="Clark S.Y."/>
            <person name="Clee C.M."/>
            <person name="Clegg S."/>
            <person name="Collier R.E."/>
            <person name="Corby N."/>
            <person name="Crosier M."/>
            <person name="Cummings A.T."/>
            <person name="Davies J."/>
            <person name="Dhami P."/>
            <person name="Dunn M."/>
            <person name="Dutta I."/>
            <person name="Dyer L.W."/>
            <person name="Earthrowl M.E."/>
            <person name="Faulkner L."/>
            <person name="Fleming C.J."/>
            <person name="Frankish A."/>
            <person name="Frankland J.A."/>
            <person name="French L."/>
            <person name="Fricker D.G."/>
            <person name="Garner P."/>
            <person name="Garnett J."/>
            <person name="Ghori J."/>
            <person name="Gilbert J.G.R."/>
            <person name="Glison C."/>
            <person name="Grafham D.V."/>
            <person name="Gribble S."/>
            <person name="Griffiths C."/>
            <person name="Griffiths-Jones S."/>
            <person name="Grocock R."/>
            <person name="Guy J."/>
            <person name="Hall R.E."/>
            <person name="Hammond S."/>
            <person name="Harley J.L."/>
            <person name="Harrison E.S.I."/>
            <person name="Hart E.A."/>
            <person name="Heath P.D."/>
            <person name="Henderson C.D."/>
            <person name="Hopkins B.L."/>
            <person name="Howard P.J."/>
            <person name="Howden P.J."/>
            <person name="Huckle E."/>
            <person name="Johnson C."/>
            <person name="Johnson D."/>
            <person name="Joy A.A."/>
            <person name="Kay M."/>
            <person name="Keenan S."/>
            <person name="Kershaw J.K."/>
            <person name="Kimberley A.M."/>
            <person name="King A."/>
            <person name="Knights A."/>
            <person name="Laird G.K."/>
            <person name="Langford C."/>
            <person name="Lawlor S."/>
            <person name="Leongamornlert D.A."/>
            <person name="Leversha M."/>
            <person name="Lloyd C."/>
            <person name="Lloyd D.M."/>
            <person name="Lovell J."/>
            <person name="Martin S."/>
            <person name="Mashreghi-Mohammadi M."/>
            <person name="Matthews L."/>
            <person name="McLaren S."/>
            <person name="McLay K.E."/>
            <person name="McMurray A."/>
            <person name="Milne S."/>
            <person name="Nickerson T."/>
            <person name="Nisbett J."/>
            <person name="Nordsiek G."/>
            <person name="Pearce A.V."/>
            <person name="Peck A.I."/>
            <person name="Porter K.M."/>
            <person name="Pandian R."/>
            <person name="Pelan S."/>
            <person name="Phillimore B."/>
            <person name="Povey S."/>
            <person name="Ramsey Y."/>
            <person name="Rand V."/>
            <person name="Scharfe M."/>
            <person name="Sehra H.K."/>
            <person name="Shownkeen R."/>
            <person name="Sims S.K."/>
            <person name="Skuce C.D."/>
            <person name="Smith M."/>
            <person name="Steward C.A."/>
            <person name="Swarbreck D."/>
            <person name="Sycamore N."/>
            <person name="Tester J."/>
            <person name="Thorpe A."/>
            <person name="Tracey A."/>
            <person name="Tromans A."/>
            <person name="Thomas D.W."/>
            <person name="Wall M."/>
            <person name="Wallis J.M."/>
            <person name="West A.P."/>
            <person name="Whitehead S.L."/>
            <person name="Willey D.L."/>
            <person name="Williams S.A."/>
            <person name="Wilming L."/>
            <person name="Wray P.W."/>
            <person name="Young L."/>
            <person name="Ashurst J.L."/>
            <person name="Coulson A."/>
            <person name="Blocker H."/>
            <person name="Durbin R.M."/>
            <person name="Sulston J.E."/>
            <person name="Hubbard T."/>
            <person name="Jackson M.J."/>
            <person name="Bentley D.R."/>
            <person name="Beck S."/>
            <person name="Rogers J."/>
            <person name="Dunham I."/>
        </authorList>
    </citation>
    <scope>NUCLEOTIDE SEQUENCE [LARGE SCALE GENOMIC DNA]</scope>
</reference>
<reference key="5">
    <citation type="submission" date="2005-07" db="EMBL/GenBank/DDBJ databases">
        <authorList>
            <person name="Mural R.J."/>
            <person name="Istrail S."/>
            <person name="Sutton G.G."/>
            <person name="Florea L."/>
            <person name="Halpern A.L."/>
            <person name="Mobarry C.M."/>
            <person name="Lippert R."/>
            <person name="Walenz B."/>
            <person name="Shatkay H."/>
            <person name="Dew I."/>
            <person name="Miller J.R."/>
            <person name="Flanigan M.J."/>
            <person name="Edwards N.J."/>
            <person name="Bolanos R."/>
            <person name="Fasulo D."/>
            <person name="Halldorsson B.V."/>
            <person name="Hannenhalli S."/>
            <person name="Turner R."/>
            <person name="Yooseph S."/>
            <person name="Lu F."/>
            <person name="Nusskern D.R."/>
            <person name="Shue B.C."/>
            <person name="Zheng X.H."/>
            <person name="Zhong F."/>
            <person name="Delcher A.L."/>
            <person name="Huson D.H."/>
            <person name="Kravitz S.A."/>
            <person name="Mouchard L."/>
            <person name="Reinert K."/>
            <person name="Remington K.A."/>
            <person name="Clark A.G."/>
            <person name="Waterman M.S."/>
            <person name="Eichler E.E."/>
            <person name="Adams M.D."/>
            <person name="Hunkapiller M.W."/>
            <person name="Myers E.W."/>
            <person name="Venter J.C."/>
        </authorList>
    </citation>
    <scope>NUCLEOTIDE SEQUENCE [LARGE SCALE GENOMIC DNA]</scope>
</reference>
<reference key="6">
    <citation type="journal article" date="2004" name="Genome Res.">
        <title>The status, quality, and expansion of the NIH full-length cDNA project: the Mammalian Gene Collection (MGC).</title>
        <authorList>
            <consortium name="The MGC Project Team"/>
        </authorList>
    </citation>
    <scope>NUCLEOTIDE SEQUENCE [LARGE SCALE MRNA] (ISOFORM 1)</scope>
    <source>
        <tissue>Skin</tissue>
    </source>
</reference>
<reference key="7">
    <citation type="journal article" date="2003" name="Nat. Biotechnol.">
        <title>Exploring proteomes and analyzing protein processing by mass spectrometric identification of sorted N-terminal peptides.</title>
        <authorList>
            <person name="Gevaert K."/>
            <person name="Goethals M."/>
            <person name="Martens L."/>
            <person name="Van Damme J."/>
            <person name="Staes A."/>
            <person name="Thomas G.R."/>
            <person name="Vandekerckhove J."/>
        </authorList>
    </citation>
    <scope>PROTEIN SEQUENCE OF 2-10</scope>
    <scope>ACETYLATION AT ALA-2</scope>
    <source>
        <tissue>Platelet</tissue>
    </source>
</reference>
<reference key="8">
    <citation type="submission" date="2004-10" db="UniProtKB">
        <authorList>
            <person name="Bienvenut W.V."/>
        </authorList>
    </citation>
    <scope>PROTEIN SEQUENCE OF 2-10</scope>
    <scope>CLEAVAGE OF INITIATOR METHIONINE</scope>
    <scope>ACETYLATION AT ALA-2</scope>
    <scope>IDENTIFICATION BY MASS SPECTROMETRY</scope>
    <source>
        <tissue>B-cell lymphoma</tissue>
    </source>
</reference>
<reference key="9">
    <citation type="journal article" date="2009" name="Cell">
        <title>Assembly pathway of the Mammalian proteasome base subcomplex is mediated by multiple specific chaperones.</title>
        <authorList>
            <person name="Kaneko T."/>
            <person name="Hamazaki J."/>
            <person name="Iemura S."/>
            <person name="Sasaki K."/>
            <person name="Furuyama K."/>
            <person name="Natsume T."/>
            <person name="Tanaka K."/>
            <person name="Murata S."/>
        </authorList>
    </citation>
    <scope>FUNCTION AS PROTEASOME CHAPERONE</scope>
    <scope>SUBUNIT</scope>
    <scope>INTERACTION WITH PSMC2</scope>
</reference>
<reference key="10">
    <citation type="journal article" date="2009" name="Mol. Cell">
        <title>Hsm3/S5b participates in the assembly pathway of the 19S regulatory particle of the proteasome.</title>
        <authorList>
            <person name="Le Tallec B."/>
            <person name="Barrault M.B."/>
            <person name="Guerois R."/>
            <person name="Carre T."/>
            <person name="Peyroche A."/>
        </authorList>
    </citation>
    <scope>INTERACTION WITH PSMC1; PSMC2; PSMD1 AND PSMD6</scope>
</reference>
<reference key="11">
    <citation type="journal article" date="2009" name="Nature">
        <title>Chaperone-mediated pathway of proteasome regulatory particle assembly.</title>
        <authorList>
            <person name="Roelofs J."/>
            <person name="Park S."/>
            <person name="Haas W."/>
            <person name="Tian G."/>
            <person name="McAllister F.E."/>
            <person name="Huo Y."/>
            <person name="Lee B.H."/>
            <person name="Zhang F."/>
            <person name="Shi Y."/>
            <person name="Gygi S.P."/>
            <person name="Finley D."/>
        </authorList>
    </citation>
    <scope>FUNCTION AS PROTEASOME CHAPERONE</scope>
    <scope>INTERACTION WITH PSMC2</scope>
</reference>
<reference key="12">
    <citation type="journal article" date="2011" name="BMC Syst. Biol.">
        <title>Initial characterization of the human central proteome.</title>
        <authorList>
            <person name="Burkard T.R."/>
            <person name="Planyavsky M."/>
            <person name="Kaupe I."/>
            <person name="Breitwieser F.P."/>
            <person name="Buerckstuemmer T."/>
            <person name="Bennett K.L."/>
            <person name="Superti-Furga G."/>
            <person name="Colinge J."/>
        </authorList>
    </citation>
    <scope>IDENTIFICATION BY MASS SPECTROMETRY [LARGE SCALE ANALYSIS]</scope>
</reference>
<reference key="13">
    <citation type="journal article" date="2012" name="Mol. Cell. Proteomics">
        <title>Comparative large-scale characterisation of plant vs. mammal proteins reveals similar and idiosyncratic N-alpha acetylation features.</title>
        <authorList>
            <person name="Bienvenut W.V."/>
            <person name="Sumpton D."/>
            <person name="Martinez A."/>
            <person name="Lilla S."/>
            <person name="Espagne C."/>
            <person name="Meinnel T."/>
            <person name="Giglione C."/>
        </authorList>
    </citation>
    <scope>ACETYLATION [LARGE SCALE ANALYSIS] AT ALA-2</scope>
    <scope>CLEAVAGE OF INITIATOR METHIONINE [LARGE SCALE ANALYSIS]</scope>
    <scope>IDENTIFICATION BY MASS SPECTROMETRY [LARGE SCALE ANALYSIS]</scope>
</reference>
<reference key="14">
    <citation type="journal article" date="2012" name="Proc. Natl. Acad. Sci. U.S.A.">
        <title>N-terminal acetylome analyses and functional insights of the N-terminal acetyltransferase NatB.</title>
        <authorList>
            <person name="Van Damme P."/>
            <person name="Lasa M."/>
            <person name="Polevoda B."/>
            <person name="Gazquez C."/>
            <person name="Elosegui-Artola A."/>
            <person name="Kim D.S."/>
            <person name="De Juan-Pardo E."/>
            <person name="Demeyer K."/>
            <person name="Hole K."/>
            <person name="Larrea E."/>
            <person name="Timmerman E."/>
            <person name="Prieto J."/>
            <person name="Arnesen T."/>
            <person name="Sherman F."/>
            <person name="Gevaert K."/>
            <person name="Aldabe R."/>
        </authorList>
    </citation>
    <scope>ACETYLATION [LARGE SCALE ANALYSIS] AT ALA-2</scope>
    <scope>CLEAVAGE OF INITIATOR METHIONINE [LARGE SCALE ANALYSIS]</scope>
    <scope>IDENTIFICATION BY MASS SPECTROMETRY [LARGE SCALE ANALYSIS]</scope>
</reference>
<reference key="15">
    <citation type="journal article" date="2014" name="J. Proteomics">
        <title>An enzyme assisted RP-RPLC approach for in-depth analysis of human liver phosphoproteome.</title>
        <authorList>
            <person name="Bian Y."/>
            <person name="Song C."/>
            <person name="Cheng K."/>
            <person name="Dong M."/>
            <person name="Wang F."/>
            <person name="Huang J."/>
            <person name="Sun D."/>
            <person name="Wang L."/>
            <person name="Ye M."/>
            <person name="Zou H."/>
        </authorList>
    </citation>
    <scope>IDENTIFICATION BY MASS SPECTROMETRY [LARGE SCALE ANALYSIS]</scope>
    <source>
        <tissue>Liver</tissue>
    </source>
</reference>
<feature type="initiator methionine" description="Removed" evidence="1 5 8 9">
    <location>
        <position position="1"/>
    </location>
</feature>
<feature type="chain" id="PRO_0000173835" description="26S proteasome non-ATPase regulatory subunit 5">
    <location>
        <begin position="2"/>
        <end position="504"/>
    </location>
</feature>
<feature type="modified residue" description="N-acetylalanine" evidence="1 5 8 9">
    <location>
        <position position="2"/>
    </location>
</feature>
<feature type="splice variant" id="VSP_045176" description="In isoform 2." evidence="6">
    <location>
        <begin position="145"/>
        <end position="187"/>
    </location>
</feature>
<feature type="sequence variant" id="VAR_051556" description="In dbSNP:rs2297575.">
    <original>E</original>
    <variation>G</variation>
    <location>
        <position position="21"/>
    </location>
</feature>
<feature type="sequence variant" id="VAR_051557" description="In dbSNP:rs17282618.">
    <original>L</original>
    <variation>H</variation>
    <location>
        <position position="72"/>
    </location>
</feature>
<accession>Q16401</accession>
<accession>B4DZM8</accession>
<accession>Q15045</accession>
<accession>Q4VXG8</accession>
<protein>
    <recommendedName>
        <fullName>26S proteasome non-ATPase regulatory subunit 5</fullName>
    </recommendedName>
    <alternativeName>
        <fullName>26S protease subunit S5 basic</fullName>
    </alternativeName>
    <alternativeName>
        <fullName>26S proteasome subunit S5B</fullName>
    </alternativeName>
</protein>
<keyword id="KW-0007">Acetylation</keyword>
<keyword id="KW-0025">Alternative splicing</keyword>
<keyword id="KW-0143">Chaperone</keyword>
<keyword id="KW-0903">Direct protein sequencing</keyword>
<keyword id="KW-1267">Proteomics identification</keyword>
<keyword id="KW-1185">Reference proteome</keyword>